<dbReference type="EC" id="1.1.1.290" evidence="1"/>
<dbReference type="EMBL" id="CP000094">
    <property type="protein sequence ID" value="ABA75623.1"/>
    <property type="molecule type" value="Genomic_DNA"/>
</dbReference>
<dbReference type="RefSeq" id="WP_011335202.1">
    <property type="nucleotide sequence ID" value="NC_007492.2"/>
</dbReference>
<dbReference type="SMR" id="Q3K9D1"/>
<dbReference type="KEGG" id="pfo:Pfl01_3886"/>
<dbReference type="eggNOG" id="COG0111">
    <property type="taxonomic scope" value="Bacteria"/>
</dbReference>
<dbReference type="HOGENOM" id="CLU_019796_4_0_6"/>
<dbReference type="UniPathway" id="UPA00244">
    <property type="reaction ID" value="UER00310"/>
</dbReference>
<dbReference type="Proteomes" id="UP000002704">
    <property type="component" value="Chromosome"/>
</dbReference>
<dbReference type="GO" id="GO:0005829">
    <property type="term" value="C:cytosol"/>
    <property type="evidence" value="ECO:0007669"/>
    <property type="project" value="TreeGrafter"/>
</dbReference>
<dbReference type="GO" id="GO:0033711">
    <property type="term" value="F:4-phosphoerythronate dehydrogenase activity"/>
    <property type="evidence" value="ECO:0007669"/>
    <property type="project" value="UniProtKB-EC"/>
</dbReference>
<dbReference type="GO" id="GO:0051287">
    <property type="term" value="F:NAD binding"/>
    <property type="evidence" value="ECO:0007669"/>
    <property type="project" value="InterPro"/>
</dbReference>
<dbReference type="GO" id="GO:0046983">
    <property type="term" value="F:protein dimerization activity"/>
    <property type="evidence" value="ECO:0007669"/>
    <property type="project" value="InterPro"/>
</dbReference>
<dbReference type="GO" id="GO:0036001">
    <property type="term" value="P:'de novo' pyridoxal 5'-phosphate biosynthetic process"/>
    <property type="evidence" value="ECO:0007669"/>
    <property type="project" value="TreeGrafter"/>
</dbReference>
<dbReference type="GO" id="GO:0008615">
    <property type="term" value="P:pyridoxine biosynthetic process"/>
    <property type="evidence" value="ECO:0007669"/>
    <property type="project" value="UniProtKB-UniRule"/>
</dbReference>
<dbReference type="CDD" id="cd12158">
    <property type="entry name" value="ErythrP_dh"/>
    <property type="match status" value="1"/>
</dbReference>
<dbReference type="Gene3D" id="3.30.1370.170">
    <property type="match status" value="1"/>
</dbReference>
<dbReference type="Gene3D" id="3.40.50.720">
    <property type="entry name" value="NAD(P)-binding Rossmann-like Domain"/>
    <property type="match status" value="2"/>
</dbReference>
<dbReference type="HAMAP" id="MF_01825">
    <property type="entry name" value="PdxB"/>
    <property type="match status" value="1"/>
</dbReference>
<dbReference type="InterPro" id="IPR006139">
    <property type="entry name" value="D-isomer_2_OHA_DH_cat_dom"/>
</dbReference>
<dbReference type="InterPro" id="IPR029753">
    <property type="entry name" value="D-isomer_DH_CS"/>
</dbReference>
<dbReference type="InterPro" id="IPR006140">
    <property type="entry name" value="D-isomer_DH_NAD-bd"/>
</dbReference>
<dbReference type="InterPro" id="IPR020921">
    <property type="entry name" value="Erythronate-4-P_DHase"/>
</dbReference>
<dbReference type="InterPro" id="IPR024531">
    <property type="entry name" value="Erythronate-4-P_DHase_dimer"/>
</dbReference>
<dbReference type="InterPro" id="IPR036291">
    <property type="entry name" value="NAD(P)-bd_dom_sf"/>
</dbReference>
<dbReference type="InterPro" id="IPR038251">
    <property type="entry name" value="PdxB_dimer_sf"/>
</dbReference>
<dbReference type="NCBIfam" id="NF001309">
    <property type="entry name" value="PRK00257.1"/>
    <property type="match status" value="1"/>
</dbReference>
<dbReference type="PANTHER" id="PTHR42938">
    <property type="entry name" value="FORMATE DEHYDROGENASE 1"/>
    <property type="match status" value="1"/>
</dbReference>
<dbReference type="PANTHER" id="PTHR42938:SF9">
    <property type="entry name" value="FORMATE DEHYDROGENASE 1"/>
    <property type="match status" value="1"/>
</dbReference>
<dbReference type="Pfam" id="PF00389">
    <property type="entry name" value="2-Hacid_dh"/>
    <property type="match status" value="1"/>
</dbReference>
<dbReference type="Pfam" id="PF02826">
    <property type="entry name" value="2-Hacid_dh_C"/>
    <property type="match status" value="1"/>
</dbReference>
<dbReference type="Pfam" id="PF11890">
    <property type="entry name" value="DUF3410"/>
    <property type="match status" value="1"/>
</dbReference>
<dbReference type="SUPFAM" id="SSF52283">
    <property type="entry name" value="Formate/glycerate dehydrogenase catalytic domain-like"/>
    <property type="match status" value="1"/>
</dbReference>
<dbReference type="SUPFAM" id="SSF51735">
    <property type="entry name" value="NAD(P)-binding Rossmann-fold domains"/>
    <property type="match status" value="1"/>
</dbReference>
<dbReference type="PROSITE" id="PS00671">
    <property type="entry name" value="D_2_HYDROXYACID_DH_3"/>
    <property type="match status" value="1"/>
</dbReference>
<organism>
    <name type="scientific">Pseudomonas fluorescens (strain Pf0-1)</name>
    <dbReference type="NCBI Taxonomy" id="205922"/>
    <lineage>
        <taxon>Bacteria</taxon>
        <taxon>Pseudomonadati</taxon>
        <taxon>Pseudomonadota</taxon>
        <taxon>Gammaproteobacteria</taxon>
        <taxon>Pseudomonadales</taxon>
        <taxon>Pseudomonadaceae</taxon>
        <taxon>Pseudomonas</taxon>
    </lineage>
</organism>
<feature type="chain" id="PRO_0000297453" description="Erythronate-4-phosphate dehydrogenase">
    <location>
        <begin position="1"/>
        <end position="380"/>
    </location>
</feature>
<feature type="active site" evidence="1">
    <location>
        <position position="207"/>
    </location>
</feature>
<feature type="active site" evidence="1">
    <location>
        <position position="236"/>
    </location>
</feature>
<feature type="active site" description="Proton donor" evidence="1">
    <location>
        <position position="253"/>
    </location>
</feature>
<feature type="binding site" evidence="1">
    <location>
        <position position="45"/>
    </location>
    <ligand>
        <name>substrate</name>
    </ligand>
</feature>
<feature type="binding site" evidence="1">
    <location>
        <position position="66"/>
    </location>
    <ligand>
        <name>substrate</name>
    </ligand>
</feature>
<feature type="binding site" evidence="1">
    <location>
        <position position="146"/>
    </location>
    <ligand>
        <name>NAD(+)</name>
        <dbReference type="ChEBI" id="CHEBI:57540"/>
    </ligand>
</feature>
<feature type="binding site" evidence="1">
    <location>
        <position position="174"/>
    </location>
    <ligand>
        <name>NAD(+)</name>
        <dbReference type="ChEBI" id="CHEBI:57540"/>
    </ligand>
</feature>
<feature type="binding site" evidence="1">
    <location>
        <position position="231"/>
    </location>
    <ligand>
        <name>NAD(+)</name>
        <dbReference type="ChEBI" id="CHEBI:57540"/>
    </ligand>
</feature>
<feature type="binding site" evidence="1">
    <location>
        <position position="256"/>
    </location>
    <ligand>
        <name>NAD(+)</name>
        <dbReference type="ChEBI" id="CHEBI:57540"/>
    </ligand>
</feature>
<feature type="binding site" evidence="1">
    <location>
        <position position="257"/>
    </location>
    <ligand>
        <name>substrate</name>
    </ligand>
</feature>
<sequence length="380" mass="41369">MLIVADENIPLLDAFFAGFGEIRRVPGRSIDRATVEQADVLLVRSVTNVNRALLEGSKVRFVGTCTIGTDHLDLDYFNEAGITWSSAPGCNARGVVDYVLGSLMTLAEIEGVDLRERTYGVIGAGEVGGRLIKVLKGLGWNVKVCDPPRQAAEGGDYVSLEQIIAQCDVISLHTPLTRSGDGATWHLFDEQRLQQLKPGAWLINAARGPVVDNTALREVLLEREDLQAVLDVWEAEPQVDVSLAELCVLATPHIAGYSLDGKQRGTAQIYQAYCDFIGEPASIQLGDLLPAPWLSEVSLHADSDPAWALAMLCRGVYDPRRDDADFRRTLLGSVGEQRAAFDVLRKQYPSRREIEGLKVRIEGDSPALRQIVAALGAVAV</sequence>
<name>PDXB_PSEPF</name>
<accession>Q3K9D1</accession>
<proteinExistence type="inferred from homology"/>
<evidence type="ECO:0000255" key="1">
    <source>
        <dbReference type="HAMAP-Rule" id="MF_01825"/>
    </source>
</evidence>
<reference key="1">
    <citation type="journal article" date="2009" name="Genome Biol.">
        <title>Genomic and genetic analyses of diversity and plant interactions of Pseudomonas fluorescens.</title>
        <authorList>
            <person name="Silby M.W."/>
            <person name="Cerdeno-Tarraga A.M."/>
            <person name="Vernikos G.S."/>
            <person name="Giddens S.R."/>
            <person name="Jackson R.W."/>
            <person name="Preston G.M."/>
            <person name="Zhang X.-X."/>
            <person name="Moon C.D."/>
            <person name="Gehrig S.M."/>
            <person name="Godfrey S.A.C."/>
            <person name="Knight C.G."/>
            <person name="Malone J.G."/>
            <person name="Robinson Z."/>
            <person name="Spiers A.J."/>
            <person name="Harris S."/>
            <person name="Challis G.L."/>
            <person name="Yaxley A.M."/>
            <person name="Harris D."/>
            <person name="Seeger K."/>
            <person name="Murphy L."/>
            <person name="Rutter S."/>
            <person name="Squares R."/>
            <person name="Quail M.A."/>
            <person name="Saunders E."/>
            <person name="Mavromatis K."/>
            <person name="Brettin T.S."/>
            <person name="Bentley S.D."/>
            <person name="Hothersall J."/>
            <person name="Stephens E."/>
            <person name="Thomas C.M."/>
            <person name="Parkhill J."/>
            <person name="Levy S.B."/>
            <person name="Rainey P.B."/>
            <person name="Thomson N.R."/>
        </authorList>
    </citation>
    <scope>NUCLEOTIDE SEQUENCE [LARGE SCALE GENOMIC DNA]</scope>
    <source>
        <strain>Pf0-1</strain>
    </source>
</reference>
<comment type="function">
    <text evidence="1">Catalyzes the oxidation of erythronate-4-phosphate to 3-hydroxy-2-oxo-4-phosphonooxybutanoate.</text>
</comment>
<comment type="catalytic activity">
    <reaction evidence="1">
        <text>4-phospho-D-erythronate + NAD(+) = (R)-3-hydroxy-2-oxo-4-phosphooxybutanoate + NADH + H(+)</text>
        <dbReference type="Rhea" id="RHEA:18829"/>
        <dbReference type="ChEBI" id="CHEBI:15378"/>
        <dbReference type="ChEBI" id="CHEBI:57540"/>
        <dbReference type="ChEBI" id="CHEBI:57945"/>
        <dbReference type="ChEBI" id="CHEBI:58538"/>
        <dbReference type="ChEBI" id="CHEBI:58766"/>
        <dbReference type="EC" id="1.1.1.290"/>
    </reaction>
</comment>
<comment type="pathway">
    <text evidence="1">Cofactor biosynthesis; pyridoxine 5'-phosphate biosynthesis; pyridoxine 5'-phosphate from D-erythrose 4-phosphate: step 2/5.</text>
</comment>
<comment type="subunit">
    <text evidence="1">Homodimer.</text>
</comment>
<comment type="subcellular location">
    <subcellularLocation>
        <location evidence="1">Cytoplasm</location>
    </subcellularLocation>
</comment>
<comment type="similarity">
    <text evidence="1">Belongs to the D-isomer specific 2-hydroxyacid dehydrogenase family. PdxB subfamily.</text>
</comment>
<protein>
    <recommendedName>
        <fullName evidence="1">Erythronate-4-phosphate dehydrogenase</fullName>
        <ecNumber evidence="1">1.1.1.290</ecNumber>
    </recommendedName>
</protein>
<gene>
    <name evidence="1" type="primary">pdxB</name>
    <name type="ordered locus">Pfl01_3886</name>
</gene>
<keyword id="KW-0963">Cytoplasm</keyword>
<keyword id="KW-0520">NAD</keyword>
<keyword id="KW-0560">Oxidoreductase</keyword>
<keyword id="KW-0664">Pyridoxine biosynthesis</keyword>